<dbReference type="EMBL" id="AP006714">
    <property type="protein sequence ID" value="BAD27286.1"/>
    <property type="molecule type" value="Genomic_DNA"/>
</dbReference>
<dbReference type="RefSeq" id="YP_009389564.1">
    <property type="nucleotide sequence ID" value="NC_035224.1"/>
</dbReference>
<dbReference type="SMR" id="Q6ENX0"/>
<dbReference type="GeneID" id="33347841"/>
<dbReference type="GO" id="GO:0009507">
    <property type="term" value="C:chloroplast"/>
    <property type="evidence" value="ECO:0007669"/>
    <property type="project" value="UniProtKB-SubCell"/>
</dbReference>
<dbReference type="GO" id="GO:0005763">
    <property type="term" value="C:mitochondrial small ribosomal subunit"/>
    <property type="evidence" value="ECO:0007669"/>
    <property type="project" value="TreeGrafter"/>
</dbReference>
<dbReference type="GO" id="GO:0003735">
    <property type="term" value="F:structural constituent of ribosome"/>
    <property type="evidence" value="ECO:0007669"/>
    <property type="project" value="InterPro"/>
</dbReference>
<dbReference type="GO" id="GO:0006412">
    <property type="term" value="P:translation"/>
    <property type="evidence" value="ECO:0007669"/>
    <property type="project" value="UniProtKB-UniRule"/>
</dbReference>
<dbReference type="CDD" id="cd01425">
    <property type="entry name" value="RPS2"/>
    <property type="match status" value="1"/>
</dbReference>
<dbReference type="FunFam" id="1.10.287.610:FF:000001">
    <property type="entry name" value="30S ribosomal protein S2"/>
    <property type="match status" value="1"/>
</dbReference>
<dbReference type="Gene3D" id="3.40.50.10490">
    <property type="entry name" value="Glucose-6-phosphate isomerase like protein, domain 1"/>
    <property type="match status" value="1"/>
</dbReference>
<dbReference type="Gene3D" id="1.10.287.610">
    <property type="entry name" value="Helix hairpin bin"/>
    <property type="match status" value="1"/>
</dbReference>
<dbReference type="HAMAP" id="MF_00291_B">
    <property type="entry name" value="Ribosomal_uS2_B"/>
    <property type="match status" value="1"/>
</dbReference>
<dbReference type="InterPro" id="IPR001865">
    <property type="entry name" value="Ribosomal_uS2"/>
</dbReference>
<dbReference type="InterPro" id="IPR005706">
    <property type="entry name" value="Ribosomal_uS2_bac/mit/plastid"/>
</dbReference>
<dbReference type="InterPro" id="IPR018130">
    <property type="entry name" value="Ribosomal_uS2_CS"/>
</dbReference>
<dbReference type="InterPro" id="IPR023591">
    <property type="entry name" value="Ribosomal_uS2_flav_dom_sf"/>
</dbReference>
<dbReference type="NCBIfam" id="TIGR01011">
    <property type="entry name" value="rpsB_bact"/>
    <property type="match status" value="1"/>
</dbReference>
<dbReference type="PANTHER" id="PTHR12534">
    <property type="entry name" value="30S RIBOSOMAL PROTEIN S2 PROKARYOTIC AND ORGANELLAR"/>
    <property type="match status" value="1"/>
</dbReference>
<dbReference type="PANTHER" id="PTHR12534:SF0">
    <property type="entry name" value="SMALL RIBOSOMAL SUBUNIT PROTEIN US2M"/>
    <property type="match status" value="1"/>
</dbReference>
<dbReference type="Pfam" id="PF00318">
    <property type="entry name" value="Ribosomal_S2"/>
    <property type="match status" value="1"/>
</dbReference>
<dbReference type="PRINTS" id="PR00395">
    <property type="entry name" value="RIBOSOMALS2"/>
</dbReference>
<dbReference type="SUPFAM" id="SSF52313">
    <property type="entry name" value="Ribosomal protein S2"/>
    <property type="match status" value="1"/>
</dbReference>
<dbReference type="PROSITE" id="PS00962">
    <property type="entry name" value="RIBOSOMAL_S2_1"/>
    <property type="match status" value="1"/>
</dbReference>
<dbReference type="PROSITE" id="PS00963">
    <property type="entry name" value="RIBOSOMAL_S2_2"/>
    <property type="match status" value="1"/>
</dbReference>
<gene>
    <name type="primary">rps2</name>
</gene>
<sequence>MTRRYWNINLKEMIEAGVHFGHGIKKWNPKMAPYISAKRKGTHITNLARTARFLSEACDLVFDAASQGKSFLIVGTKKRAADLVASAAIRSRCHYVNKKWFSGMLTNWSITKTRLSQFRDLRAEEKMGKFHHLPKRDAAILKRKLSTLQRYLGGIKYMTRLPDIVIVLDQQKEYIALRECAILGIPTISLVDTNCDPDLANISIPANDDTMTSIRLILNKLVFAISEGRSLYIRNR</sequence>
<geneLocation type="chloroplast"/>
<reference key="1">
    <citation type="journal article" date="2004" name="DNA Res.">
        <title>Complete nucleotide sequence of the sugarcane (Saccharum officinarum) chloroplast genome: a comparative analysis of four monocot chloroplast genomes.</title>
        <authorList>
            <person name="Asano T."/>
            <person name="Tsudzuki T."/>
            <person name="Takahashi S."/>
            <person name="Shimada H."/>
            <person name="Kadowaki K."/>
        </authorList>
    </citation>
    <scope>NUCLEOTIDE SEQUENCE [LARGE SCALE GENOMIC DNA]</scope>
</reference>
<proteinExistence type="inferred from homology"/>
<feature type="chain" id="PRO_0000226933" description="Small ribosomal subunit protein uS2c">
    <location>
        <begin position="1"/>
        <end position="236"/>
    </location>
</feature>
<evidence type="ECO:0000305" key="1"/>
<protein>
    <recommendedName>
        <fullName evidence="1">Small ribosomal subunit protein uS2c</fullName>
    </recommendedName>
    <alternativeName>
        <fullName>30S ribosomal protein S2, chloroplastic</fullName>
    </alternativeName>
</protein>
<name>RR2_SACOF</name>
<accession>Q6ENX0</accession>
<keyword id="KW-0150">Chloroplast</keyword>
<keyword id="KW-0934">Plastid</keyword>
<keyword id="KW-0687">Ribonucleoprotein</keyword>
<keyword id="KW-0689">Ribosomal protein</keyword>
<organism>
    <name type="scientific">Saccharum officinarum</name>
    <name type="common">Sugarcane</name>
    <dbReference type="NCBI Taxonomy" id="4547"/>
    <lineage>
        <taxon>Eukaryota</taxon>
        <taxon>Viridiplantae</taxon>
        <taxon>Streptophyta</taxon>
        <taxon>Embryophyta</taxon>
        <taxon>Tracheophyta</taxon>
        <taxon>Spermatophyta</taxon>
        <taxon>Magnoliopsida</taxon>
        <taxon>Liliopsida</taxon>
        <taxon>Poales</taxon>
        <taxon>Poaceae</taxon>
        <taxon>PACMAD clade</taxon>
        <taxon>Panicoideae</taxon>
        <taxon>Andropogonodae</taxon>
        <taxon>Andropogoneae</taxon>
        <taxon>Saccharinae</taxon>
        <taxon>Saccharum</taxon>
        <taxon>Saccharum officinarum species complex</taxon>
    </lineage>
</organism>
<comment type="subcellular location">
    <subcellularLocation>
        <location>Plastid</location>
        <location>Chloroplast</location>
    </subcellularLocation>
</comment>
<comment type="similarity">
    <text evidence="1">Belongs to the universal ribosomal protein uS2 family.</text>
</comment>